<name>PSIE_ECO24</name>
<accession>A7ZUQ1</accession>
<reference key="1">
    <citation type="journal article" date="2008" name="J. Bacteriol.">
        <title>The pangenome structure of Escherichia coli: comparative genomic analysis of E. coli commensal and pathogenic isolates.</title>
        <authorList>
            <person name="Rasko D.A."/>
            <person name="Rosovitz M.J."/>
            <person name="Myers G.S.A."/>
            <person name="Mongodin E.F."/>
            <person name="Fricke W.F."/>
            <person name="Gajer P."/>
            <person name="Crabtree J."/>
            <person name="Sebaihia M."/>
            <person name="Thomson N.R."/>
            <person name="Chaudhuri R."/>
            <person name="Henderson I.R."/>
            <person name="Sperandio V."/>
            <person name="Ravel J."/>
        </authorList>
    </citation>
    <scope>NUCLEOTIDE SEQUENCE [LARGE SCALE GENOMIC DNA]</scope>
    <source>
        <strain>E24377A / ETEC</strain>
    </source>
</reference>
<feature type="chain" id="PRO_1000064310" description="Protein PsiE">
    <location>
        <begin position="1"/>
        <end position="136"/>
    </location>
</feature>
<feature type="transmembrane region" description="Helical" evidence="1">
    <location>
        <begin position="15"/>
        <end position="35"/>
    </location>
</feature>
<feature type="transmembrane region" description="Helical" evidence="1">
    <location>
        <begin position="55"/>
        <end position="75"/>
    </location>
</feature>
<feature type="transmembrane region" description="Helical" evidence="1">
    <location>
        <begin position="82"/>
        <end position="102"/>
    </location>
</feature>
<feature type="transmembrane region" description="Helical" evidence="1">
    <location>
        <begin position="108"/>
        <end position="128"/>
    </location>
</feature>
<evidence type="ECO:0000255" key="1">
    <source>
        <dbReference type="HAMAP-Rule" id="MF_01048"/>
    </source>
</evidence>
<keyword id="KW-0997">Cell inner membrane</keyword>
<keyword id="KW-1003">Cell membrane</keyword>
<keyword id="KW-0472">Membrane</keyword>
<keyword id="KW-1185">Reference proteome</keyword>
<keyword id="KW-0812">Transmembrane</keyword>
<keyword id="KW-1133">Transmembrane helix</keyword>
<gene>
    <name evidence="1" type="primary">psiE</name>
    <name type="ordered locus">EcE24377A_4581</name>
</gene>
<sequence length="136" mass="15597">MTSLSRPRVEFISTILQTVLNLGLLCLGLILVVFLGKETVHLADVLFAPEQTSKYELVEGLVVYFLYFEFIALIVKYFQSGFHFPLRYFVYIGITAIVRLIIVDHKSPLDVLIYSAAILLLVITLWLCNSKRLKRE</sequence>
<organism>
    <name type="scientific">Escherichia coli O139:H28 (strain E24377A / ETEC)</name>
    <dbReference type="NCBI Taxonomy" id="331111"/>
    <lineage>
        <taxon>Bacteria</taxon>
        <taxon>Pseudomonadati</taxon>
        <taxon>Pseudomonadota</taxon>
        <taxon>Gammaproteobacteria</taxon>
        <taxon>Enterobacterales</taxon>
        <taxon>Enterobacteriaceae</taxon>
        <taxon>Escherichia</taxon>
    </lineage>
</organism>
<proteinExistence type="inferred from homology"/>
<dbReference type="EMBL" id="CP000800">
    <property type="protein sequence ID" value="ABV17068.1"/>
    <property type="molecule type" value="Genomic_DNA"/>
</dbReference>
<dbReference type="RefSeq" id="WP_000202902.1">
    <property type="nucleotide sequence ID" value="NC_009801.1"/>
</dbReference>
<dbReference type="SMR" id="A7ZUQ1"/>
<dbReference type="GeneID" id="93777857"/>
<dbReference type="KEGG" id="ecw:EcE24377A_4581"/>
<dbReference type="HOGENOM" id="CLU_127561_0_1_6"/>
<dbReference type="Proteomes" id="UP000001122">
    <property type="component" value="Chromosome"/>
</dbReference>
<dbReference type="GO" id="GO:0005886">
    <property type="term" value="C:plasma membrane"/>
    <property type="evidence" value="ECO:0007669"/>
    <property type="project" value="UniProtKB-SubCell"/>
</dbReference>
<dbReference type="GO" id="GO:0016036">
    <property type="term" value="P:cellular response to phosphate starvation"/>
    <property type="evidence" value="ECO:0007669"/>
    <property type="project" value="InterPro"/>
</dbReference>
<dbReference type="HAMAP" id="MF_01048">
    <property type="entry name" value="PsiE"/>
    <property type="match status" value="1"/>
</dbReference>
<dbReference type="InterPro" id="IPR009315">
    <property type="entry name" value="P_starv_induced_PsiE"/>
</dbReference>
<dbReference type="InterPro" id="IPR020948">
    <property type="entry name" value="P_starv_induced_PsiE-like"/>
</dbReference>
<dbReference type="NCBIfam" id="NF002764">
    <property type="entry name" value="PRK02833.1-2"/>
    <property type="match status" value="1"/>
</dbReference>
<dbReference type="NCBIfam" id="NF002765">
    <property type="entry name" value="PRK02833.1-3"/>
    <property type="match status" value="1"/>
</dbReference>
<dbReference type="NCBIfam" id="NF002767">
    <property type="entry name" value="PRK02833.1-5"/>
    <property type="match status" value="1"/>
</dbReference>
<dbReference type="PANTHER" id="PTHR37819">
    <property type="entry name" value="PROTEIN PSIE"/>
    <property type="match status" value="1"/>
</dbReference>
<dbReference type="PANTHER" id="PTHR37819:SF1">
    <property type="entry name" value="PROTEIN PSIE"/>
    <property type="match status" value="1"/>
</dbReference>
<dbReference type="Pfam" id="PF06146">
    <property type="entry name" value="PsiE"/>
    <property type="match status" value="1"/>
</dbReference>
<dbReference type="PIRSF" id="PIRSF029598">
    <property type="entry name" value="PsiE"/>
    <property type="match status" value="1"/>
</dbReference>
<comment type="subcellular location">
    <subcellularLocation>
        <location evidence="1">Cell inner membrane</location>
        <topology evidence="1">Multi-pass membrane protein</topology>
    </subcellularLocation>
</comment>
<comment type="similarity">
    <text evidence="1">Belongs to the PsiE family.</text>
</comment>
<protein>
    <recommendedName>
        <fullName evidence="1">Protein PsiE</fullName>
    </recommendedName>
</protein>